<comment type="function">
    <text evidence="1">Catalyzes the dephosphorylation of undecaprenyl diphosphate (UPP). Confers resistance to bacitracin.</text>
</comment>
<comment type="catalytic activity">
    <reaction evidence="1">
        <text>di-trans,octa-cis-undecaprenyl diphosphate + H2O = di-trans,octa-cis-undecaprenyl phosphate + phosphate + H(+)</text>
        <dbReference type="Rhea" id="RHEA:28094"/>
        <dbReference type="ChEBI" id="CHEBI:15377"/>
        <dbReference type="ChEBI" id="CHEBI:15378"/>
        <dbReference type="ChEBI" id="CHEBI:43474"/>
        <dbReference type="ChEBI" id="CHEBI:58405"/>
        <dbReference type="ChEBI" id="CHEBI:60392"/>
        <dbReference type="EC" id="3.6.1.27"/>
    </reaction>
</comment>
<comment type="subcellular location">
    <subcellularLocation>
        <location evidence="1">Cell membrane</location>
        <topology evidence="1">Multi-pass membrane protein</topology>
    </subcellularLocation>
</comment>
<comment type="miscellaneous">
    <text>Bacitracin is thought to be involved in the inhibition of peptidoglycan synthesis by sequestering undecaprenyl diphosphate, thereby reducing the pool of lipid carrier available.</text>
</comment>
<comment type="similarity">
    <text evidence="1">Belongs to the UppP family.</text>
</comment>
<gene>
    <name evidence="1" type="primary">uppP1</name>
    <name type="ordered locus">ABC1776</name>
</gene>
<keyword id="KW-0046">Antibiotic resistance</keyword>
<keyword id="KW-1003">Cell membrane</keyword>
<keyword id="KW-0133">Cell shape</keyword>
<keyword id="KW-0961">Cell wall biogenesis/degradation</keyword>
<keyword id="KW-0378">Hydrolase</keyword>
<keyword id="KW-0472">Membrane</keyword>
<keyword id="KW-0573">Peptidoglycan synthesis</keyword>
<keyword id="KW-1185">Reference proteome</keyword>
<keyword id="KW-0812">Transmembrane</keyword>
<keyword id="KW-1133">Transmembrane helix</keyword>
<proteinExistence type="inferred from homology"/>
<accession>Q5WH44</accession>
<evidence type="ECO:0000255" key="1">
    <source>
        <dbReference type="HAMAP-Rule" id="MF_01006"/>
    </source>
</evidence>
<name>UPPP1_SHOC1</name>
<protein>
    <recommendedName>
        <fullName evidence="1">Undecaprenyl-diphosphatase 1</fullName>
        <ecNumber evidence="1">3.6.1.27</ecNumber>
    </recommendedName>
    <alternativeName>
        <fullName evidence="1">Bacitracin resistance protein 1</fullName>
    </alternativeName>
    <alternativeName>
        <fullName evidence="1">Undecaprenyl pyrophosphate phosphatase 1</fullName>
    </alternativeName>
</protein>
<organism>
    <name type="scientific">Shouchella clausii (strain KSM-K16)</name>
    <name type="common">Alkalihalobacillus clausii</name>
    <dbReference type="NCBI Taxonomy" id="66692"/>
    <lineage>
        <taxon>Bacteria</taxon>
        <taxon>Bacillati</taxon>
        <taxon>Bacillota</taxon>
        <taxon>Bacilli</taxon>
        <taxon>Bacillales</taxon>
        <taxon>Bacillaceae</taxon>
        <taxon>Shouchella</taxon>
    </lineage>
</organism>
<sequence>MSLLEAVILGLVQGITEFLPISSSAHLILVQALFGMTFAGFSFEILLHLASVLAVILYYRHDLIEIIRGFFAYFTKRTPQNKAMFWFAIYLVVATGITGVAGILFEDYISETFKAPIFIALALAVTGLFLIIIERFVRHGNRTEKEMTIWDSIIVGLGQCLALIPGLSRSGTTLIVGMFAGLTKETAVRFSFLLSIPVILGSSVLAIDDLISGDLLASTGLFELAASFVVTFIASWLGIVFFLNLVRKSKLVYFAVYCFIVAILVFIFQDALGHADI</sequence>
<dbReference type="EC" id="3.6.1.27" evidence="1"/>
<dbReference type="EMBL" id="AP006627">
    <property type="protein sequence ID" value="BAD64311.1"/>
    <property type="molecule type" value="Genomic_DNA"/>
</dbReference>
<dbReference type="RefSeq" id="WP_011246619.1">
    <property type="nucleotide sequence ID" value="NC_006582.1"/>
</dbReference>
<dbReference type="SMR" id="Q5WH44"/>
<dbReference type="STRING" id="66692.ABC1776"/>
<dbReference type="KEGG" id="bcl:ABC1776"/>
<dbReference type="eggNOG" id="COG1968">
    <property type="taxonomic scope" value="Bacteria"/>
</dbReference>
<dbReference type="HOGENOM" id="CLU_060296_1_2_9"/>
<dbReference type="OrthoDB" id="9808289at2"/>
<dbReference type="Proteomes" id="UP000001168">
    <property type="component" value="Chromosome"/>
</dbReference>
<dbReference type="GO" id="GO:0005886">
    <property type="term" value="C:plasma membrane"/>
    <property type="evidence" value="ECO:0007669"/>
    <property type="project" value="UniProtKB-SubCell"/>
</dbReference>
<dbReference type="GO" id="GO:0050380">
    <property type="term" value="F:undecaprenyl-diphosphatase activity"/>
    <property type="evidence" value="ECO:0007669"/>
    <property type="project" value="UniProtKB-UniRule"/>
</dbReference>
<dbReference type="GO" id="GO:0071555">
    <property type="term" value="P:cell wall organization"/>
    <property type="evidence" value="ECO:0007669"/>
    <property type="project" value="UniProtKB-KW"/>
</dbReference>
<dbReference type="GO" id="GO:0009252">
    <property type="term" value="P:peptidoglycan biosynthetic process"/>
    <property type="evidence" value="ECO:0007669"/>
    <property type="project" value="UniProtKB-KW"/>
</dbReference>
<dbReference type="GO" id="GO:0008360">
    <property type="term" value="P:regulation of cell shape"/>
    <property type="evidence" value="ECO:0007669"/>
    <property type="project" value="UniProtKB-KW"/>
</dbReference>
<dbReference type="GO" id="GO:0046677">
    <property type="term" value="P:response to antibiotic"/>
    <property type="evidence" value="ECO:0007669"/>
    <property type="project" value="UniProtKB-UniRule"/>
</dbReference>
<dbReference type="HAMAP" id="MF_01006">
    <property type="entry name" value="Undec_diphosphatase"/>
    <property type="match status" value="1"/>
</dbReference>
<dbReference type="InterPro" id="IPR003824">
    <property type="entry name" value="UppP"/>
</dbReference>
<dbReference type="PANTHER" id="PTHR30622">
    <property type="entry name" value="UNDECAPRENYL-DIPHOSPHATASE"/>
    <property type="match status" value="1"/>
</dbReference>
<dbReference type="PANTHER" id="PTHR30622:SF2">
    <property type="entry name" value="UNDECAPRENYL-DIPHOSPHATASE"/>
    <property type="match status" value="1"/>
</dbReference>
<dbReference type="Pfam" id="PF02673">
    <property type="entry name" value="BacA"/>
    <property type="match status" value="1"/>
</dbReference>
<feature type="chain" id="PRO_0000151107" description="Undecaprenyl-diphosphatase 1">
    <location>
        <begin position="1"/>
        <end position="277"/>
    </location>
</feature>
<feature type="transmembrane region" description="Helical" evidence="1">
    <location>
        <begin position="1"/>
        <end position="21"/>
    </location>
</feature>
<feature type="transmembrane region" description="Helical" evidence="1">
    <location>
        <begin position="39"/>
        <end position="58"/>
    </location>
</feature>
<feature type="transmembrane region" description="Helical" evidence="1">
    <location>
        <begin position="85"/>
        <end position="105"/>
    </location>
</feature>
<feature type="transmembrane region" description="Helical" evidence="1">
    <location>
        <begin position="113"/>
        <end position="133"/>
    </location>
</feature>
<feature type="transmembrane region" description="Helical" evidence="1">
    <location>
        <begin position="147"/>
        <end position="167"/>
    </location>
</feature>
<feature type="transmembrane region" description="Helical" evidence="1">
    <location>
        <begin position="191"/>
        <end position="211"/>
    </location>
</feature>
<feature type="transmembrane region" description="Helical" evidence="1">
    <location>
        <begin position="226"/>
        <end position="246"/>
    </location>
</feature>
<feature type="transmembrane region" description="Helical" evidence="1">
    <location>
        <begin position="251"/>
        <end position="271"/>
    </location>
</feature>
<reference key="1">
    <citation type="submission" date="2003-10" db="EMBL/GenBank/DDBJ databases">
        <title>The complete genome sequence of the alkaliphilic Bacillus clausii KSM-K16.</title>
        <authorList>
            <person name="Takaki Y."/>
            <person name="Kageyama Y."/>
            <person name="Shimamura S."/>
            <person name="Suzuki H."/>
            <person name="Nishi S."/>
            <person name="Hatada Y."/>
            <person name="Kawai S."/>
            <person name="Ito S."/>
            <person name="Horikoshi K."/>
        </authorList>
    </citation>
    <scope>NUCLEOTIDE SEQUENCE [LARGE SCALE GENOMIC DNA]</scope>
    <source>
        <strain>KSM-K16</strain>
    </source>
</reference>